<evidence type="ECO:0000255" key="1">
    <source>
        <dbReference type="HAMAP-Rule" id="MF_01693"/>
    </source>
</evidence>
<reference key="1">
    <citation type="journal article" date="2001" name="Nature">
        <title>Complete genome sequence of Salmonella enterica serovar Typhimurium LT2.</title>
        <authorList>
            <person name="McClelland M."/>
            <person name="Sanderson K.E."/>
            <person name="Spieth J."/>
            <person name="Clifton S.W."/>
            <person name="Latreille P."/>
            <person name="Courtney L."/>
            <person name="Porwollik S."/>
            <person name="Ali J."/>
            <person name="Dante M."/>
            <person name="Du F."/>
            <person name="Hou S."/>
            <person name="Layman D."/>
            <person name="Leonard S."/>
            <person name="Nguyen C."/>
            <person name="Scott K."/>
            <person name="Holmes A."/>
            <person name="Grewal N."/>
            <person name="Mulvaney E."/>
            <person name="Ryan E."/>
            <person name="Sun H."/>
            <person name="Florea L."/>
            <person name="Miller W."/>
            <person name="Stoneking T."/>
            <person name="Nhan M."/>
            <person name="Waterston R."/>
            <person name="Wilson R.K."/>
        </authorList>
    </citation>
    <scope>NUCLEOTIDE SEQUENCE [LARGE SCALE GENOMIC DNA]</scope>
    <source>
        <strain>LT2 / SGSC1412 / ATCC 700720</strain>
    </source>
</reference>
<comment type="function">
    <text evidence="1">Catalyzes the decarboxylative condensation of pimeloyl-[acyl-carrier protein] and L-alanine to produce 8-amino-7-oxononanoate (AON), [acyl-carrier protein], and carbon dioxide.</text>
</comment>
<comment type="catalytic activity">
    <reaction evidence="1">
        <text>6-carboxyhexanoyl-[ACP] + L-alanine + H(+) = (8S)-8-amino-7-oxononanoate + holo-[ACP] + CO2</text>
        <dbReference type="Rhea" id="RHEA:42288"/>
        <dbReference type="Rhea" id="RHEA-COMP:9685"/>
        <dbReference type="Rhea" id="RHEA-COMP:9955"/>
        <dbReference type="ChEBI" id="CHEBI:15378"/>
        <dbReference type="ChEBI" id="CHEBI:16526"/>
        <dbReference type="ChEBI" id="CHEBI:57972"/>
        <dbReference type="ChEBI" id="CHEBI:64479"/>
        <dbReference type="ChEBI" id="CHEBI:78846"/>
        <dbReference type="ChEBI" id="CHEBI:149468"/>
        <dbReference type="EC" id="2.3.1.47"/>
    </reaction>
</comment>
<comment type="cofactor">
    <cofactor evidence="1">
        <name>pyridoxal 5'-phosphate</name>
        <dbReference type="ChEBI" id="CHEBI:597326"/>
    </cofactor>
</comment>
<comment type="pathway">
    <text evidence="1">Cofactor biosynthesis; biotin biosynthesis.</text>
</comment>
<comment type="subunit">
    <text evidence="1">Homodimer.</text>
</comment>
<comment type="similarity">
    <text evidence="1">Belongs to the class-II pyridoxal-phosphate-dependent aminotransferase family. BioF subfamily.</text>
</comment>
<sequence length="385" mass="41956">MSWQQRVDDALTARRVTDTLRRRYVVSQGAGRWLVANGRQYLNFSSNDYLGLSQHPQIIRAWQQAATRFGVGSGGSGHISGYSVAHQALEEELAQWLGYPRALLFISGFAANQAVITALMKKNDRIVADRLSHASLLEAANLSPAQLRRFIHNDTQHLSRLLQSPCVGQQLVVTEGVYSMDGDSAPLAEIQHIARRHHAWLLVDDAHGIGVTGDEGRGTCWLRGVKPELLVVTFGKGFGVSGAAVLCSESVADYLLQFARHLVYSTSMPPAQAQALSASLAVIRSDEGGERREKLAALVQRFRAGVNASRFTLLNAHSAIQPLIVGDNSRALRLAEALRQQGCWATAIRPPTVPVGTARLRLTLTQAHEACDIDRLLEVLHGAGE</sequence>
<proteinExistence type="inferred from homology"/>
<feature type="chain" id="PRO_0000381106" description="8-amino-7-oxononanoate synthase">
    <location>
        <begin position="1"/>
        <end position="385"/>
    </location>
</feature>
<feature type="binding site" evidence="1">
    <location>
        <position position="21"/>
    </location>
    <ligand>
        <name>substrate</name>
    </ligand>
</feature>
<feature type="binding site" evidence="1">
    <location>
        <begin position="108"/>
        <end position="109"/>
    </location>
    <ligand>
        <name>pyridoxal 5'-phosphate</name>
        <dbReference type="ChEBI" id="CHEBI:597326"/>
    </ligand>
</feature>
<feature type="binding site" evidence="1">
    <location>
        <position position="133"/>
    </location>
    <ligand>
        <name>substrate</name>
    </ligand>
</feature>
<feature type="binding site" evidence="1">
    <location>
        <position position="179"/>
    </location>
    <ligand>
        <name>pyridoxal 5'-phosphate</name>
        <dbReference type="ChEBI" id="CHEBI:597326"/>
    </ligand>
</feature>
<feature type="binding site" evidence="1">
    <location>
        <position position="207"/>
    </location>
    <ligand>
        <name>pyridoxal 5'-phosphate</name>
        <dbReference type="ChEBI" id="CHEBI:597326"/>
    </ligand>
</feature>
<feature type="binding site" evidence="1">
    <location>
        <position position="233"/>
    </location>
    <ligand>
        <name>pyridoxal 5'-phosphate</name>
        <dbReference type="ChEBI" id="CHEBI:597326"/>
    </ligand>
</feature>
<feature type="binding site" evidence="1">
    <location>
        <position position="352"/>
    </location>
    <ligand>
        <name>substrate</name>
    </ligand>
</feature>
<feature type="modified residue" description="N6-(pyridoxal phosphate)lysine" evidence="1">
    <location>
        <position position="236"/>
    </location>
</feature>
<accession>Q8ZQQ7</accession>
<name>BIOF_SALTY</name>
<organism>
    <name type="scientific">Salmonella typhimurium (strain LT2 / SGSC1412 / ATCC 700720)</name>
    <dbReference type="NCBI Taxonomy" id="99287"/>
    <lineage>
        <taxon>Bacteria</taxon>
        <taxon>Pseudomonadati</taxon>
        <taxon>Pseudomonadota</taxon>
        <taxon>Gammaproteobacteria</taxon>
        <taxon>Enterobacterales</taxon>
        <taxon>Enterobacteriaceae</taxon>
        <taxon>Salmonella</taxon>
    </lineage>
</organism>
<gene>
    <name evidence="1" type="primary">bioF</name>
    <name type="ordered locus">STM0795</name>
</gene>
<dbReference type="EC" id="2.3.1.47" evidence="1"/>
<dbReference type="EMBL" id="AE006468">
    <property type="protein sequence ID" value="AAL19732.1"/>
    <property type="molecule type" value="Genomic_DNA"/>
</dbReference>
<dbReference type="RefSeq" id="NP_459773.1">
    <property type="nucleotide sequence ID" value="NC_003197.2"/>
</dbReference>
<dbReference type="RefSeq" id="WP_000118953.1">
    <property type="nucleotide sequence ID" value="NC_003197.2"/>
</dbReference>
<dbReference type="SMR" id="Q8ZQQ7"/>
<dbReference type="STRING" id="99287.STM0795"/>
<dbReference type="PaxDb" id="99287-STM0795"/>
<dbReference type="GeneID" id="1252315"/>
<dbReference type="KEGG" id="stm:STM0795"/>
<dbReference type="PATRIC" id="fig|99287.12.peg.829"/>
<dbReference type="HOGENOM" id="CLU_015846_11_2_6"/>
<dbReference type="OMA" id="FSMDGDQ"/>
<dbReference type="PhylomeDB" id="Q8ZQQ7"/>
<dbReference type="BioCyc" id="SENT99287:STM0795-MONOMER"/>
<dbReference type="UniPathway" id="UPA00078"/>
<dbReference type="Proteomes" id="UP000001014">
    <property type="component" value="Chromosome"/>
</dbReference>
<dbReference type="GO" id="GO:0008710">
    <property type="term" value="F:8-amino-7-oxononanoate synthase activity"/>
    <property type="evidence" value="ECO:0000318"/>
    <property type="project" value="GO_Central"/>
</dbReference>
<dbReference type="GO" id="GO:0030170">
    <property type="term" value="F:pyridoxal phosphate binding"/>
    <property type="evidence" value="ECO:0007669"/>
    <property type="project" value="UniProtKB-UniRule"/>
</dbReference>
<dbReference type="GO" id="GO:0009102">
    <property type="term" value="P:biotin biosynthetic process"/>
    <property type="evidence" value="ECO:0000318"/>
    <property type="project" value="GO_Central"/>
</dbReference>
<dbReference type="CDD" id="cd06454">
    <property type="entry name" value="KBL_like"/>
    <property type="match status" value="1"/>
</dbReference>
<dbReference type="FunFam" id="3.40.640.10:FF:000095">
    <property type="entry name" value="8-amino-7-oxononanoate synthase"/>
    <property type="match status" value="1"/>
</dbReference>
<dbReference type="Gene3D" id="3.90.1150.10">
    <property type="entry name" value="Aspartate Aminotransferase, domain 1"/>
    <property type="match status" value="1"/>
</dbReference>
<dbReference type="Gene3D" id="3.40.640.10">
    <property type="entry name" value="Type I PLP-dependent aspartate aminotransferase-like (Major domain)"/>
    <property type="match status" value="1"/>
</dbReference>
<dbReference type="HAMAP" id="MF_01693">
    <property type="entry name" value="BioF_aminotrans_2"/>
    <property type="match status" value="1"/>
</dbReference>
<dbReference type="InterPro" id="IPR001917">
    <property type="entry name" value="Aminotrans_II_pyridoxalP_BS"/>
</dbReference>
<dbReference type="InterPro" id="IPR004839">
    <property type="entry name" value="Aminotransferase_I/II_large"/>
</dbReference>
<dbReference type="InterPro" id="IPR050087">
    <property type="entry name" value="AON_synthase_class-II"/>
</dbReference>
<dbReference type="InterPro" id="IPR004723">
    <property type="entry name" value="AONS_Archaea/Proteobacteria"/>
</dbReference>
<dbReference type="InterPro" id="IPR022834">
    <property type="entry name" value="AONS_Proteobacteria"/>
</dbReference>
<dbReference type="InterPro" id="IPR015424">
    <property type="entry name" value="PyrdxlP-dep_Trfase"/>
</dbReference>
<dbReference type="InterPro" id="IPR015421">
    <property type="entry name" value="PyrdxlP-dep_Trfase_major"/>
</dbReference>
<dbReference type="InterPro" id="IPR015422">
    <property type="entry name" value="PyrdxlP-dep_Trfase_small"/>
</dbReference>
<dbReference type="NCBIfam" id="TIGR00858">
    <property type="entry name" value="bioF"/>
    <property type="match status" value="1"/>
</dbReference>
<dbReference type="PANTHER" id="PTHR13693:SF100">
    <property type="entry name" value="8-AMINO-7-OXONONANOATE SYNTHASE"/>
    <property type="match status" value="1"/>
</dbReference>
<dbReference type="PANTHER" id="PTHR13693">
    <property type="entry name" value="CLASS II AMINOTRANSFERASE/8-AMINO-7-OXONONANOATE SYNTHASE"/>
    <property type="match status" value="1"/>
</dbReference>
<dbReference type="Pfam" id="PF00155">
    <property type="entry name" value="Aminotran_1_2"/>
    <property type="match status" value="1"/>
</dbReference>
<dbReference type="SUPFAM" id="SSF53383">
    <property type="entry name" value="PLP-dependent transferases"/>
    <property type="match status" value="1"/>
</dbReference>
<dbReference type="PROSITE" id="PS00599">
    <property type="entry name" value="AA_TRANSFER_CLASS_2"/>
    <property type="match status" value="1"/>
</dbReference>
<protein>
    <recommendedName>
        <fullName evidence="1">8-amino-7-oxononanoate synthase</fullName>
        <shortName evidence="1">AONS</shortName>
        <ecNumber evidence="1">2.3.1.47</ecNumber>
    </recommendedName>
    <alternativeName>
        <fullName evidence="1">7-keto-8-amino-pelargonic acid synthase</fullName>
        <shortName evidence="1">7-KAP synthase</shortName>
        <shortName evidence="1">KAPA synthase</shortName>
    </alternativeName>
    <alternativeName>
        <fullName evidence="1">8-amino-7-ketopelargonate synthase</fullName>
    </alternativeName>
</protein>
<keyword id="KW-0093">Biotin biosynthesis</keyword>
<keyword id="KW-0663">Pyridoxal phosphate</keyword>
<keyword id="KW-1185">Reference proteome</keyword>
<keyword id="KW-0808">Transferase</keyword>